<sequence length="254" mass="28644">MAAGAVAWLLLWAAWLVGRLAADFSDAPFSAGKGVRATCSEIILRQEFLKDGFHRDLLIKVKFGESIEDLQTCRLLIKHYIPPGLFVDPYELASLRERNLTEAVMLSESFNIEAPNYLSNESAVLIYARQDAQCIDCFQAFLPVHYRYHRPHKKDGDTLIVVNNPDLLMYCDQEFPILKCWAQSEVAAPCALKSEEICQWKSMQYKSILKNLTVQVPVGLTIHTSLVCSVTLLITILCSTLILLAVFKYGHFSL</sequence>
<name>PIGX_MOUSE</name>
<gene>
    <name evidence="5" type="primary">Pigx</name>
</gene>
<keyword id="KW-0025">Alternative splicing</keyword>
<keyword id="KW-0256">Endoplasmic reticulum</keyword>
<keyword id="KW-0325">Glycoprotein</keyword>
<keyword id="KW-0337">GPI-anchor biosynthesis</keyword>
<keyword id="KW-0472">Membrane</keyword>
<keyword id="KW-1185">Reference proteome</keyword>
<keyword id="KW-0732">Signal</keyword>
<keyword id="KW-0812">Transmembrane</keyword>
<keyword id="KW-1133">Transmembrane helix</keyword>
<feature type="signal peptide" evidence="2">
    <location>
        <begin position="1"/>
        <end position="22"/>
    </location>
</feature>
<feature type="chain" id="PRO_0000246296" description="GPI alpha-1,4-mannosyltransferase I, stabilizing subunit">
    <location>
        <begin position="23"/>
        <end position="254"/>
    </location>
</feature>
<feature type="topological domain" description="Lumenal" evidence="2">
    <location>
        <begin position="23"/>
        <end position="226"/>
    </location>
</feature>
<feature type="transmembrane region" description="Helical" evidence="2">
    <location>
        <begin position="227"/>
        <end position="247"/>
    </location>
</feature>
<feature type="topological domain" description="Cytoplasmic" evidence="2">
    <location>
        <begin position="248"/>
        <end position="254"/>
    </location>
</feature>
<feature type="glycosylation site" description="N-linked (GlcNAc...) asparagine" evidence="2">
    <location>
        <position position="211"/>
    </location>
</feature>
<feature type="splice variant" id="VSP_019843" description="In isoform 2." evidence="3">
    <location>
        <begin position="1"/>
        <end position="104"/>
    </location>
</feature>
<evidence type="ECO:0000250" key="1">
    <source>
        <dbReference type="UniProtKB" id="Q60GF7"/>
    </source>
</evidence>
<evidence type="ECO:0000255" key="2"/>
<evidence type="ECO:0000303" key="3">
    <source>
    </source>
</evidence>
<evidence type="ECO:0000305" key="4"/>
<evidence type="ECO:0000312" key="5">
    <source>
        <dbReference type="MGI" id="MGI:1919334"/>
    </source>
</evidence>
<organism>
    <name type="scientific">Mus musculus</name>
    <name type="common">Mouse</name>
    <dbReference type="NCBI Taxonomy" id="10090"/>
    <lineage>
        <taxon>Eukaryota</taxon>
        <taxon>Metazoa</taxon>
        <taxon>Chordata</taxon>
        <taxon>Craniata</taxon>
        <taxon>Vertebrata</taxon>
        <taxon>Euteleostomi</taxon>
        <taxon>Mammalia</taxon>
        <taxon>Eutheria</taxon>
        <taxon>Euarchontoglires</taxon>
        <taxon>Glires</taxon>
        <taxon>Rodentia</taxon>
        <taxon>Myomorpha</taxon>
        <taxon>Muroidea</taxon>
        <taxon>Muridae</taxon>
        <taxon>Murinae</taxon>
        <taxon>Mus</taxon>
        <taxon>Mus</taxon>
    </lineage>
</organism>
<dbReference type="EMBL" id="AK008583">
    <property type="protein sequence ID" value="BAC25223.1"/>
    <property type="status" value="ALT_SEQ"/>
    <property type="molecule type" value="mRNA"/>
</dbReference>
<dbReference type="EMBL" id="BC002202">
    <property type="protein sequence ID" value="AAH02202.1"/>
    <property type="molecule type" value="mRNA"/>
</dbReference>
<dbReference type="CCDS" id="CCDS28113.2">
    <molecule id="Q99LV7-1"/>
</dbReference>
<dbReference type="RefSeq" id="NP_077784.2">
    <molecule id="Q99LV7-1"/>
    <property type="nucleotide sequence ID" value="NM_024464.3"/>
</dbReference>
<dbReference type="SMR" id="Q99LV7"/>
<dbReference type="BioGRID" id="215140">
    <property type="interactions" value="1"/>
</dbReference>
<dbReference type="FunCoup" id="Q99LV7">
    <property type="interactions" value="118"/>
</dbReference>
<dbReference type="IntAct" id="Q99LV7">
    <property type="interactions" value="1"/>
</dbReference>
<dbReference type="STRING" id="10090.ENSMUSP00000093819"/>
<dbReference type="GlyCosmos" id="Q99LV7">
    <property type="glycosylation" value="1 site, No reported glycans"/>
</dbReference>
<dbReference type="GlyGen" id="Q99LV7">
    <property type="glycosylation" value="1 site"/>
</dbReference>
<dbReference type="PhosphoSitePlus" id="Q99LV7"/>
<dbReference type="PaxDb" id="10090-ENSMUSP00000093819"/>
<dbReference type="PeptideAtlas" id="Q99LV7"/>
<dbReference type="ProteomicsDB" id="287726">
    <molecule id="Q99LV7-1"/>
</dbReference>
<dbReference type="ProteomicsDB" id="287727">
    <molecule id="Q99LV7-2"/>
</dbReference>
<dbReference type="Pumba" id="Q99LV7"/>
<dbReference type="Antibodypedia" id="33945">
    <property type="antibodies" value="138 antibodies from 24 providers"/>
</dbReference>
<dbReference type="DNASU" id="72084"/>
<dbReference type="Ensembl" id="ENSMUST00000096109.11">
    <molecule id="Q99LV7-1"/>
    <property type="protein sequence ID" value="ENSMUSP00000093819.5"/>
    <property type="gene ID" value="ENSMUSG00000023791.19"/>
</dbReference>
<dbReference type="Ensembl" id="ENSMUST00000232321.2">
    <molecule id="Q99LV7-2"/>
    <property type="protein sequence ID" value="ENSMUSP00000156144.2"/>
    <property type="gene ID" value="ENSMUSG00000023791.19"/>
</dbReference>
<dbReference type="GeneID" id="72084"/>
<dbReference type="KEGG" id="mmu:72084"/>
<dbReference type="UCSC" id="uc007yye.3">
    <molecule id="Q99LV7-1"/>
    <property type="organism name" value="mouse"/>
</dbReference>
<dbReference type="AGR" id="MGI:1919334"/>
<dbReference type="CTD" id="54965"/>
<dbReference type="MGI" id="MGI:1919334">
    <property type="gene designation" value="Pigx"/>
</dbReference>
<dbReference type="VEuPathDB" id="HostDB:ENSMUSG00000023791"/>
<dbReference type="eggNOG" id="ENOG502S32M">
    <property type="taxonomic scope" value="Eukaryota"/>
</dbReference>
<dbReference type="GeneTree" id="ENSGT00390000017679"/>
<dbReference type="InParanoid" id="Q99LV7"/>
<dbReference type="OMA" id="ALSKYMW"/>
<dbReference type="OrthoDB" id="5546453at2759"/>
<dbReference type="PhylomeDB" id="Q99LV7"/>
<dbReference type="Reactome" id="R-MMU-162710">
    <property type="pathway name" value="Synthesis of glycosylphosphatidylinositol (GPI)"/>
</dbReference>
<dbReference type="UniPathway" id="UPA00196"/>
<dbReference type="BioGRID-ORCS" id="72084">
    <property type="hits" value="5 hits in 79 CRISPR screens"/>
</dbReference>
<dbReference type="ChiTaRS" id="Pigx">
    <property type="organism name" value="mouse"/>
</dbReference>
<dbReference type="PRO" id="PR:Q99LV7"/>
<dbReference type="Proteomes" id="UP000000589">
    <property type="component" value="Chromosome 16"/>
</dbReference>
<dbReference type="RNAct" id="Q99LV7">
    <property type="molecule type" value="protein"/>
</dbReference>
<dbReference type="Bgee" id="ENSMUSG00000023791">
    <property type="expression patterns" value="Expressed in metanephric ureteric bud and 263 other cell types or tissues"/>
</dbReference>
<dbReference type="ExpressionAtlas" id="Q99LV7">
    <property type="expression patterns" value="baseline and differential"/>
</dbReference>
<dbReference type="GO" id="GO:0005789">
    <property type="term" value="C:endoplasmic reticulum membrane"/>
    <property type="evidence" value="ECO:0007669"/>
    <property type="project" value="UniProtKB-SubCell"/>
</dbReference>
<dbReference type="GO" id="GO:0006506">
    <property type="term" value="P:GPI anchor biosynthetic process"/>
    <property type="evidence" value="ECO:0007669"/>
    <property type="project" value="UniProtKB-UniPathway"/>
</dbReference>
<dbReference type="InterPro" id="IPR013233">
    <property type="entry name" value="PIG-X/PBN1"/>
</dbReference>
<dbReference type="InterPro" id="IPR040039">
    <property type="entry name" value="PIGX"/>
</dbReference>
<dbReference type="PANTHER" id="PTHR28650">
    <property type="entry name" value="PHOSPHATIDYLINOSITOL-GLYCAN BIOSYNTHESIS CLASS X PROTEIN"/>
    <property type="match status" value="1"/>
</dbReference>
<dbReference type="PANTHER" id="PTHR28650:SF1">
    <property type="entry name" value="PHOSPHATIDYLINOSITOL-GLYCAN BIOSYNTHESIS CLASS X PROTEIN"/>
    <property type="match status" value="1"/>
</dbReference>
<dbReference type="Pfam" id="PF08320">
    <property type="entry name" value="PIG-X"/>
    <property type="match status" value="1"/>
</dbReference>
<dbReference type="SMART" id="SM00780">
    <property type="entry name" value="PIG-X"/>
    <property type="match status" value="1"/>
</dbReference>
<protein>
    <recommendedName>
        <fullName evidence="4">GPI alpha-1,4-mannosyltransferase I, stabilizing subunit</fullName>
    </recommendedName>
    <alternativeName>
        <fullName>Phosphatidylinositol-glycan biosynthesis class X protein</fullName>
        <shortName evidence="1">PIG-X</shortName>
    </alternativeName>
</protein>
<accession>Q99LV7</accession>
<comment type="function">
    <text evidence="1">Stabilizing subunit of the glycosylphosphatidylinositol-mannosyltransferase I complex which catalyzes the transfer of the first mannose, via an alpha-1,4 bond from a dolichol-phosphate-mannose (Dol-P-Man) to the glucosaminyl acyl phosphatidylinositol (GlcN-(acyl)PI) intermediate to generate alpha-D-Man-(1-&gt;4)-alpha-D-GlcN-(1-&gt;6)-(1-radyl,2-acyl-sn-glycero-3-phospho)-2-acyl-inositol and participates in the sixth step of the glycosylphosphatidylinositol-anchor biosynthesis. Probably acts by stabilizing the mannosyltransferase PIGM.</text>
</comment>
<comment type="pathway">
    <text evidence="1">Glycolipid biosynthesis; glycosylphosphatidylinositol-anchor biosynthesis.</text>
</comment>
<comment type="subunit">
    <text evidence="1">Part of the glycosylphosphatidylinositol-mannosyltransferase I complex that is composed of PIGM and PIGX. Interacts with PIGM; PIGX stabilizes PIGM.</text>
</comment>
<comment type="subcellular location">
    <subcellularLocation>
        <location evidence="1">Endoplasmic reticulum membrane</location>
        <topology evidence="1">Single-pass type I membrane protein</topology>
    </subcellularLocation>
</comment>
<comment type="alternative products">
    <event type="alternative splicing"/>
    <isoform>
        <id>Q99LV7-1</id>
        <name>1</name>
        <sequence type="displayed"/>
    </isoform>
    <isoform>
        <id>Q99LV7-2</id>
        <name>2</name>
        <sequence type="described" ref="VSP_019843"/>
    </isoform>
</comment>
<comment type="similarity">
    <text evidence="4">Belongs to the PIGX family.</text>
</comment>
<comment type="sequence caution" evidence="4">
    <conflict type="miscellaneous discrepancy">
        <sequence resource="EMBL-CDS" id="BAC25223"/>
    </conflict>
    <text>Unusual initiator. The initiator methionine is coded by a non-canonical CTG leucine codon.</text>
</comment>
<proteinExistence type="evidence at transcript level"/>
<reference key="1">
    <citation type="journal article" date="2005" name="Science">
        <title>The transcriptional landscape of the mammalian genome.</title>
        <authorList>
            <person name="Carninci P."/>
            <person name="Kasukawa T."/>
            <person name="Katayama S."/>
            <person name="Gough J."/>
            <person name="Frith M.C."/>
            <person name="Maeda N."/>
            <person name="Oyama R."/>
            <person name="Ravasi T."/>
            <person name="Lenhard B."/>
            <person name="Wells C."/>
            <person name="Kodzius R."/>
            <person name="Shimokawa K."/>
            <person name="Bajic V.B."/>
            <person name="Brenner S.E."/>
            <person name="Batalov S."/>
            <person name="Forrest A.R."/>
            <person name="Zavolan M."/>
            <person name="Davis M.J."/>
            <person name="Wilming L.G."/>
            <person name="Aidinis V."/>
            <person name="Allen J.E."/>
            <person name="Ambesi-Impiombato A."/>
            <person name="Apweiler R."/>
            <person name="Aturaliya R.N."/>
            <person name="Bailey T.L."/>
            <person name="Bansal M."/>
            <person name="Baxter L."/>
            <person name="Beisel K.W."/>
            <person name="Bersano T."/>
            <person name="Bono H."/>
            <person name="Chalk A.M."/>
            <person name="Chiu K.P."/>
            <person name="Choudhary V."/>
            <person name="Christoffels A."/>
            <person name="Clutterbuck D.R."/>
            <person name="Crowe M.L."/>
            <person name="Dalla E."/>
            <person name="Dalrymple B.P."/>
            <person name="de Bono B."/>
            <person name="Della Gatta G."/>
            <person name="di Bernardo D."/>
            <person name="Down T."/>
            <person name="Engstrom P."/>
            <person name="Fagiolini M."/>
            <person name="Faulkner G."/>
            <person name="Fletcher C.F."/>
            <person name="Fukushima T."/>
            <person name="Furuno M."/>
            <person name="Futaki S."/>
            <person name="Gariboldi M."/>
            <person name="Georgii-Hemming P."/>
            <person name="Gingeras T.R."/>
            <person name="Gojobori T."/>
            <person name="Green R.E."/>
            <person name="Gustincich S."/>
            <person name="Harbers M."/>
            <person name="Hayashi Y."/>
            <person name="Hensch T.K."/>
            <person name="Hirokawa N."/>
            <person name="Hill D."/>
            <person name="Huminiecki L."/>
            <person name="Iacono M."/>
            <person name="Ikeo K."/>
            <person name="Iwama A."/>
            <person name="Ishikawa T."/>
            <person name="Jakt M."/>
            <person name="Kanapin A."/>
            <person name="Katoh M."/>
            <person name="Kawasawa Y."/>
            <person name="Kelso J."/>
            <person name="Kitamura H."/>
            <person name="Kitano H."/>
            <person name="Kollias G."/>
            <person name="Krishnan S.P."/>
            <person name="Kruger A."/>
            <person name="Kummerfeld S.K."/>
            <person name="Kurochkin I.V."/>
            <person name="Lareau L.F."/>
            <person name="Lazarevic D."/>
            <person name="Lipovich L."/>
            <person name="Liu J."/>
            <person name="Liuni S."/>
            <person name="McWilliam S."/>
            <person name="Madan Babu M."/>
            <person name="Madera M."/>
            <person name="Marchionni L."/>
            <person name="Matsuda H."/>
            <person name="Matsuzawa S."/>
            <person name="Miki H."/>
            <person name="Mignone F."/>
            <person name="Miyake S."/>
            <person name="Morris K."/>
            <person name="Mottagui-Tabar S."/>
            <person name="Mulder N."/>
            <person name="Nakano N."/>
            <person name="Nakauchi H."/>
            <person name="Ng P."/>
            <person name="Nilsson R."/>
            <person name="Nishiguchi S."/>
            <person name="Nishikawa S."/>
            <person name="Nori F."/>
            <person name="Ohara O."/>
            <person name="Okazaki Y."/>
            <person name="Orlando V."/>
            <person name="Pang K.C."/>
            <person name="Pavan W.J."/>
            <person name="Pavesi G."/>
            <person name="Pesole G."/>
            <person name="Petrovsky N."/>
            <person name="Piazza S."/>
            <person name="Reed J."/>
            <person name="Reid J.F."/>
            <person name="Ring B.Z."/>
            <person name="Ringwald M."/>
            <person name="Rost B."/>
            <person name="Ruan Y."/>
            <person name="Salzberg S.L."/>
            <person name="Sandelin A."/>
            <person name="Schneider C."/>
            <person name="Schoenbach C."/>
            <person name="Sekiguchi K."/>
            <person name="Semple C.A."/>
            <person name="Seno S."/>
            <person name="Sessa L."/>
            <person name="Sheng Y."/>
            <person name="Shibata Y."/>
            <person name="Shimada H."/>
            <person name="Shimada K."/>
            <person name="Silva D."/>
            <person name="Sinclair B."/>
            <person name="Sperling S."/>
            <person name="Stupka E."/>
            <person name="Sugiura K."/>
            <person name="Sultana R."/>
            <person name="Takenaka Y."/>
            <person name="Taki K."/>
            <person name="Tammoja K."/>
            <person name="Tan S.L."/>
            <person name="Tang S."/>
            <person name="Taylor M.S."/>
            <person name="Tegner J."/>
            <person name="Teichmann S.A."/>
            <person name="Ueda H.R."/>
            <person name="van Nimwegen E."/>
            <person name="Verardo R."/>
            <person name="Wei C.L."/>
            <person name="Yagi K."/>
            <person name="Yamanishi H."/>
            <person name="Zabarovsky E."/>
            <person name="Zhu S."/>
            <person name="Zimmer A."/>
            <person name="Hide W."/>
            <person name="Bult C."/>
            <person name="Grimmond S.M."/>
            <person name="Teasdale R.D."/>
            <person name="Liu E.T."/>
            <person name="Brusic V."/>
            <person name="Quackenbush J."/>
            <person name="Wahlestedt C."/>
            <person name="Mattick J.S."/>
            <person name="Hume D.A."/>
            <person name="Kai C."/>
            <person name="Sasaki D."/>
            <person name="Tomaru Y."/>
            <person name="Fukuda S."/>
            <person name="Kanamori-Katayama M."/>
            <person name="Suzuki M."/>
            <person name="Aoki J."/>
            <person name="Arakawa T."/>
            <person name="Iida J."/>
            <person name="Imamura K."/>
            <person name="Itoh M."/>
            <person name="Kato T."/>
            <person name="Kawaji H."/>
            <person name="Kawagashira N."/>
            <person name="Kawashima T."/>
            <person name="Kojima M."/>
            <person name="Kondo S."/>
            <person name="Konno H."/>
            <person name="Nakano K."/>
            <person name="Ninomiya N."/>
            <person name="Nishio T."/>
            <person name="Okada M."/>
            <person name="Plessy C."/>
            <person name="Shibata K."/>
            <person name="Shiraki T."/>
            <person name="Suzuki S."/>
            <person name="Tagami M."/>
            <person name="Waki K."/>
            <person name="Watahiki A."/>
            <person name="Okamura-Oho Y."/>
            <person name="Suzuki H."/>
            <person name="Kawai J."/>
            <person name="Hayashizaki Y."/>
        </authorList>
    </citation>
    <scope>NUCLEOTIDE SEQUENCE [LARGE SCALE MRNA] (ISOFORM 1)</scope>
    <source>
        <strain>C57BL/6J</strain>
        <tissue>Small intestine</tissue>
    </source>
</reference>
<reference key="2">
    <citation type="journal article" date="2004" name="Genome Res.">
        <title>The status, quality, and expansion of the NIH full-length cDNA project: the Mammalian Gene Collection (MGC).</title>
        <authorList>
            <consortium name="The MGC Project Team"/>
        </authorList>
    </citation>
    <scope>NUCLEOTIDE SEQUENCE [LARGE SCALE MRNA] (ISOFORM 2)</scope>
    <source>
        <strain>FVB/N</strain>
        <tissue>Mammary tumor</tissue>
    </source>
</reference>
<reference key="3">
    <citation type="journal article" date="2005" name="Mol. Biol. Cell">
        <title>Mammalian PIG-X and yeast Pbn1p are the essential components of glycosylphosphatidylinositol-mannosyltransferase I.</title>
        <authorList>
            <person name="Ashida H."/>
            <person name="Hong Y."/>
            <person name="Murakami Y."/>
            <person name="Shishioh N."/>
            <person name="Sugimoto N."/>
            <person name="Kim Y.U."/>
            <person name="Maeda Y."/>
            <person name="Kinoshita T."/>
        </authorList>
    </citation>
    <scope>INITIATION CODON CTG</scope>
</reference>